<gene>
    <name evidence="1" type="primary">plsY</name>
    <name type="ordered locus">SAR1365</name>
</gene>
<protein>
    <recommendedName>
        <fullName evidence="1">Glycerol-3-phosphate acyltransferase</fullName>
    </recommendedName>
    <alternativeName>
        <fullName evidence="1">Acyl-PO4 G3P acyltransferase</fullName>
    </alternativeName>
    <alternativeName>
        <fullName evidence="1">Acyl-phosphate--glycerol-3-phosphate acyltransferase</fullName>
    </alternativeName>
    <alternativeName>
        <fullName evidence="1">G3P acyltransferase</fullName>
        <shortName evidence="1">GPAT</shortName>
        <ecNumber evidence="1">2.3.1.275</ecNumber>
    </alternativeName>
    <alternativeName>
        <fullName evidence="1">Lysophosphatidic acid synthase</fullName>
        <shortName evidence="1">LPA synthase</shortName>
    </alternativeName>
</protein>
<organism>
    <name type="scientific">Staphylococcus aureus (strain MRSA252)</name>
    <dbReference type="NCBI Taxonomy" id="282458"/>
    <lineage>
        <taxon>Bacteria</taxon>
        <taxon>Bacillati</taxon>
        <taxon>Bacillota</taxon>
        <taxon>Bacilli</taxon>
        <taxon>Bacillales</taxon>
        <taxon>Staphylococcaceae</taxon>
        <taxon>Staphylococcus</taxon>
    </lineage>
</organism>
<accession>Q6GH52</accession>
<proteinExistence type="inferred from homology"/>
<feature type="chain" id="PRO_0000188450" description="Glycerol-3-phosphate acyltransferase">
    <location>
        <begin position="1"/>
        <end position="202"/>
    </location>
</feature>
<feature type="transmembrane region" description="Helical" evidence="1">
    <location>
        <begin position="2"/>
        <end position="22"/>
    </location>
</feature>
<feature type="transmembrane region" description="Helical" evidence="1">
    <location>
        <begin position="54"/>
        <end position="74"/>
    </location>
</feature>
<feature type="transmembrane region" description="Helical" evidence="1">
    <location>
        <begin position="85"/>
        <end position="105"/>
    </location>
</feature>
<feature type="transmembrane region" description="Helical" evidence="1">
    <location>
        <begin position="120"/>
        <end position="140"/>
    </location>
</feature>
<feature type="transmembrane region" description="Helical" evidence="1">
    <location>
        <begin position="141"/>
        <end position="161"/>
    </location>
</feature>
<feature type="transmembrane region" description="Helical" evidence="1">
    <location>
        <begin position="162"/>
        <end position="182"/>
    </location>
</feature>
<name>PLSY_STAAR</name>
<dbReference type="EC" id="2.3.1.275" evidence="1"/>
<dbReference type="EMBL" id="BX571856">
    <property type="protein sequence ID" value="CAG40363.1"/>
    <property type="molecule type" value="Genomic_DNA"/>
</dbReference>
<dbReference type="RefSeq" id="WP_000972779.1">
    <property type="nucleotide sequence ID" value="NC_002952.2"/>
</dbReference>
<dbReference type="SMR" id="Q6GH52"/>
<dbReference type="KEGG" id="sar:SAR1365"/>
<dbReference type="HOGENOM" id="CLU_081254_4_0_9"/>
<dbReference type="UniPathway" id="UPA00085"/>
<dbReference type="Proteomes" id="UP000000596">
    <property type="component" value="Chromosome"/>
</dbReference>
<dbReference type="GO" id="GO:0005886">
    <property type="term" value="C:plasma membrane"/>
    <property type="evidence" value="ECO:0007669"/>
    <property type="project" value="UniProtKB-SubCell"/>
</dbReference>
<dbReference type="GO" id="GO:0043772">
    <property type="term" value="F:acyl-phosphate glycerol-3-phosphate acyltransferase activity"/>
    <property type="evidence" value="ECO:0007669"/>
    <property type="project" value="UniProtKB-UniRule"/>
</dbReference>
<dbReference type="GO" id="GO:0008654">
    <property type="term" value="P:phospholipid biosynthetic process"/>
    <property type="evidence" value="ECO:0007669"/>
    <property type="project" value="UniProtKB-UniRule"/>
</dbReference>
<dbReference type="HAMAP" id="MF_01043">
    <property type="entry name" value="PlsY"/>
    <property type="match status" value="1"/>
</dbReference>
<dbReference type="InterPro" id="IPR003811">
    <property type="entry name" value="G3P_acylTferase_PlsY"/>
</dbReference>
<dbReference type="NCBIfam" id="TIGR00023">
    <property type="entry name" value="glycerol-3-phosphate 1-O-acyltransferase PlsY"/>
    <property type="match status" value="1"/>
</dbReference>
<dbReference type="PANTHER" id="PTHR30309:SF0">
    <property type="entry name" value="GLYCEROL-3-PHOSPHATE ACYLTRANSFERASE-RELATED"/>
    <property type="match status" value="1"/>
</dbReference>
<dbReference type="PANTHER" id="PTHR30309">
    <property type="entry name" value="INNER MEMBRANE PROTEIN YGIH"/>
    <property type="match status" value="1"/>
</dbReference>
<dbReference type="Pfam" id="PF02660">
    <property type="entry name" value="G3P_acyltransf"/>
    <property type="match status" value="1"/>
</dbReference>
<dbReference type="SMART" id="SM01207">
    <property type="entry name" value="G3P_acyltransf"/>
    <property type="match status" value="1"/>
</dbReference>
<comment type="function">
    <text evidence="1">Catalyzes the transfer of an acyl group from acyl-phosphate (acyl-PO(4)) to glycerol-3-phosphate (G3P) to form lysophosphatidic acid (LPA). This enzyme utilizes acyl-phosphate as fatty acyl donor, but not acyl-CoA or acyl-ACP.</text>
</comment>
<comment type="catalytic activity">
    <reaction evidence="1">
        <text>an acyl phosphate + sn-glycerol 3-phosphate = a 1-acyl-sn-glycero-3-phosphate + phosphate</text>
        <dbReference type="Rhea" id="RHEA:34075"/>
        <dbReference type="ChEBI" id="CHEBI:43474"/>
        <dbReference type="ChEBI" id="CHEBI:57597"/>
        <dbReference type="ChEBI" id="CHEBI:57970"/>
        <dbReference type="ChEBI" id="CHEBI:59918"/>
        <dbReference type="EC" id="2.3.1.275"/>
    </reaction>
</comment>
<comment type="pathway">
    <text evidence="1">Lipid metabolism; phospholipid metabolism.</text>
</comment>
<comment type="subunit">
    <text evidence="1">Probably interacts with PlsX.</text>
</comment>
<comment type="subcellular location">
    <subcellularLocation>
        <location evidence="1">Cell membrane</location>
        <topology evidence="1">Multi-pass membrane protein</topology>
    </subcellularLocation>
</comment>
<comment type="similarity">
    <text evidence="1">Belongs to the PlsY family.</text>
</comment>
<reference key="1">
    <citation type="journal article" date="2004" name="Proc. Natl. Acad. Sci. U.S.A.">
        <title>Complete genomes of two clinical Staphylococcus aureus strains: evidence for the rapid evolution of virulence and drug resistance.</title>
        <authorList>
            <person name="Holden M.T.G."/>
            <person name="Feil E.J."/>
            <person name="Lindsay J.A."/>
            <person name="Peacock S.J."/>
            <person name="Day N.P.J."/>
            <person name="Enright M.C."/>
            <person name="Foster T.J."/>
            <person name="Moore C.E."/>
            <person name="Hurst L."/>
            <person name="Atkin R."/>
            <person name="Barron A."/>
            <person name="Bason N."/>
            <person name="Bentley S.D."/>
            <person name="Chillingworth C."/>
            <person name="Chillingworth T."/>
            <person name="Churcher C."/>
            <person name="Clark L."/>
            <person name="Corton C."/>
            <person name="Cronin A."/>
            <person name="Doggett J."/>
            <person name="Dowd L."/>
            <person name="Feltwell T."/>
            <person name="Hance Z."/>
            <person name="Harris B."/>
            <person name="Hauser H."/>
            <person name="Holroyd S."/>
            <person name="Jagels K."/>
            <person name="James K.D."/>
            <person name="Lennard N."/>
            <person name="Line A."/>
            <person name="Mayes R."/>
            <person name="Moule S."/>
            <person name="Mungall K."/>
            <person name="Ormond D."/>
            <person name="Quail M.A."/>
            <person name="Rabbinowitsch E."/>
            <person name="Rutherford K.M."/>
            <person name="Sanders M."/>
            <person name="Sharp S."/>
            <person name="Simmonds M."/>
            <person name="Stevens K."/>
            <person name="Whitehead S."/>
            <person name="Barrell B.G."/>
            <person name="Spratt B.G."/>
            <person name="Parkhill J."/>
        </authorList>
    </citation>
    <scope>NUCLEOTIDE SEQUENCE [LARGE SCALE GENOMIC DNA]</scope>
    <source>
        <strain>MRSA252</strain>
    </source>
</reference>
<evidence type="ECO:0000255" key="1">
    <source>
        <dbReference type="HAMAP-Rule" id="MF_01043"/>
    </source>
</evidence>
<keyword id="KW-1003">Cell membrane</keyword>
<keyword id="KW-0444">Lipid biosynthesis</keyword>
<keyword id="KW-0443">Lipid metabolism</keyword>
<keyword id="KW-0472">Membrane</keyword>
<keyword id="KW-0594">Phospholipid biosynthesis</keyword>
<keyword id="KW-1208">Phospholipid metabolism</keyword>
<keyword id="KW-0808">Transferase</keyword>
<keyword id="KW-0812">Transmembrane</keyword>
<keyword id="KW-1133">Transmembrane helix</keyword>
<sequence>MMIIVMLLLSYLIGAFPSGFVIGKLFFKKDIRQFGSGNTGATNSFRVLGRPAGFLVTFLDIFKGFITVFFPLWLPVHADGPISTFFTNGLIVGLFAILGHVYPVYLKFQGGKAVATSAGVVLGVNPILLLILAIIFFIVLKIFKYVSLASIVAAICCVIGSLIIQDYILLVVSFLVSIILIIRHRSNIARIFRGEEPKIKWM</sequence>